<feature type="initiator methionine" description="Removed" evidence="1">
    <location>
        <position position="1"/>
    </location>
</feature>
<feature type="chain" id="PRO_0000136264" description="Histidine--tRNA ligase">
    <location>
        <begin position="2"/>
        <end position="429"/>
    </location>
</feature>
<gene>
    <name evidence="2" type="primary">hisS</name>
    <name type="ordered locus">SP_2121</name>
</gene>
<organism>
    <name type="scientific">Streptococcus pneumoniae serotype 4 (strain ATCC BAA-334 / TIGR4)</name>
    <dbReference type="NCBI Taxonomy" id="170187"/>
    <lineage>
        <taxon>Bacteria</taxon>
        <taxon>Bacillati</taxon>
        <taxon>Bacillota</taxon>
        <taxon>Bacilli</taxon>
        <taxon>Lactobacillales</taxon>
        <taxon>Streptococcaceae</taxon>
        <taxon>Streptococcus</taxon>
    </lineage>
</organism>
<name>SYH_STRPN</name>
<dbReference type="EC" id="6.1.1.21" evidence="2"/>
<dbReference type="EMBL" id="AE005672">
    <property type="protein sequence ID" value="AAK76180.1"/>
    <property type="molecule type" value="Genomic_DNA"/>
</dbReference>
<dbReference type="PIR" id="C95248">
    <property type="entry name" value="C95248"/>
</dbReference>
<dbReference type="RefSeq" id="WP_000775862.1">
    <property type="nucleotide sequence ID" value="NZ_CP155539.1"/>
</dbReference>
<dbReference type="SMR" id="Q97NC9"/>
<dbReference type="PaxDb" id="170187-SP_2121"/>
<dbReference type="EnsemblBacteria" id="AAK76180">
    <property type="protein sequence ID" value="AAK76180"/>
    <property type="gene ID" value="SP_2121"/>
</dbReference>
<dbReference type="KEGG" id="spn:SP_2121"/>
<dbReference type="eggNOG" id="COG0124">
    <property type="taxonomic scope" value="Bacteria"/>
</dbReference>
<dbReference type="PhylomeDB" id="Q97NC9"/>
<dbReference type="BioCyc" id="SPNE170187:G1FZB-2212-MONOMER"/>
<dbReference type="Proteomes" id="UP000000585">
    <property type="component" value="Chromosome"/>
</dbReference>
<dbReference type="GO" id="GO:0005737">
    <property type="term" value="C:cytoplasm"/>
    <property type="evidence" value="ECO:0007669"/>
    <property type="project" value="UniProtKB-SubCell"/>
</dbReference>
<dbReference type="GO" id="GO:0005524">
    <property type="term" value="F:ATP binding"/>
    <property type="evidence" value="ECO:0007669"/>
    <property type="project" value="UniProtKB-UniRule"/>
</dbReference>
<dbReference type="GO" id="GO:0140096">
    <property type="term" value="F:catalytic activity, acting on a protein"/>
    <property type="evidence" value="ECO:0007669"/>
    <property type="project" value="UniProtKB-ARBA"/>
</dbReference>
<dbReference type="GO" id="GO:0004821">
    <property type="term" value="F:histidine-tRNA ligase activity"/>
    <property type="evidence" value="ECO:0007669"/>
    <property type="project" value="UniProtKB-UniRule"/>
</dbReference>
<dbReference type="GO" id="GO:0016740">
    <property type="term" value="F:transferase activity"/>
    <property type="evidence" value="ECO:0007669"/>
    <property type="project" value="UniProtKB-ARBA"/>
</dbReference>
<dbReference type="GO" id="GO:0006427">
    <property type="term" value="P:histidyl-tRNA aminoacylation"/>
    <property type="evidence" value="ECO:0007669"/>
    <property type="project" value="UniProtKB-UniRule"/>
</dbReference>
<dbReference type="CDD" id="cd00773">
    <property type="entry name" value="HisRS-like_core"/>
    <property type="match status" value="1"/>
</dbReference>
<dbReference type="CDD" id="cd00859">
    <property type="entry name" value="HisRS_anticodon"/>
    <property type="match status" value="1"/>
</dbReference>
<dbReference type="FunFam" id="3.30.930.10:FF:000005">
    <property type="entry name" value="Histidine--tRNA ligase"/>
    <property type="match status" value="1"/>
</dbReference>
<dbReference type="FunFam" id="3.40.50.800:FF:000022">
    <property type="entry name" value="Histidine--tRNA ligase"/>
    <property type="match status" value="1"/>
</dbReference>
<dbReference type="Gene3D" id="3.40.50.800">
    <property type="entry name" value="Anticodon-binding domain"/>
    <property type="match status" value="1"/>
</dbReference>
<dbReference type="Gene3D" id="3.30.930.10">
    <property type="entry name" value="Bira Bifunctional Protein, Domain 2"/>
    <property type="match status" value="1"/>
</dbReference>
<dbReference type="HAMAP" id="MF_00127">
    <property type="entry name" value="His_tRNA_synth"/>
    <property type="match status" value="1"/>
</dbReference>
<dbReference type="InterPro" id="IPR006195">
    <property type="entry name" value="aa-tRNA-synth_II"/>
</dbReference>
<dbReference type="InterPro" id="IPR045864">
    <property type="entry name" value="aa-tRNA-synth_II/BPL/LPL"/>
</dbReference>
<dbReference type="InterPro" id="IPR004154">
    <property type="entry name" value="Anticodon-bd"/>
</dbReference>
<dbReference type="InterPro" id="IPR036621">
    <property type="entry name" value="Anticodon-bd_dom_sf"/>
</dbReference>
<dbReference type="InterPro" id="IPR015807">
    <property type="entry name" value="His-tRNA-ligase"/>
</dbReference>
<dbReference type="InterPro" id="IPR041715">
    <property type="entry name" value="HisRS-like_core"/>
</dbReference>
<dbReference type="InterPro" id="IPR004516">
    <property type="entry name" value="HisRS/HisZ"/>
</dbReference>
<dbReference type="InterPro" id="IPR033656">
    <property type="entry name" value="HisRS_anticodon"/>
</dbReference>
<dbReference type="NCBIfam" id="TIGR00442">
    <property type="entry name" value="hisS"/>
    <property type="match status" value="1"/>
</dbReference>
<dbReference type="PANTHER" id="PTHR43707:SF1">
    <property type="entry name" value="HISTIDINE--TRNA LIGASE, MITOCHONDRIAL-RELATED"/>
    <property type="match status" value="1"/>
</dbReference>
<dbReference type="PANTHER" id="PTHR43707">
    <property type="entry name" value="HISTIDYL-TRNA SYNTHETASE"/>
    <property type="match status" value="1"/>
</dbReference>
<dbReference type="Pfam" id="PF03129">
    <property type="entry name" value="HGTP_anticodon"/>
    <property type="match status" value="1"/>
</dbReference>
<dbReference type="Pfam" id="PF13393">
    <property type="entry name" value="tRNA-synt_His"/>
    <property type="match status" value="1"/>
</dbReference>
<dbReference type="PIRSF" id="PIRSF001549">
    <property type="entry name" value="His-tRNA_synth"/>
    <property type="match status" value="1"/>
</dbReference>
<dbReference type="SUPFAM" id="SSF52954">
    <property type="entry name" value="Class II aaRS ABD-related"/>
    <property type="match status" value="1"/>
</dbReference>
<dbReference type="SUPFAM" id="SSF55681">
    <property type="entry name" value="Class II aaRS and biotin synthetases"/>
    <property type="match status" value="1"/>
</dbReference>
<dbReference type="PROSITE" id="PS50862">
    <property type="entry name" value="AA_TRNA_LIGASE_II"/>
    <property type="match status" value="1"/>
</dbReference>
<reference key="1">
    <citation type="journal article" date="2001" name="Science">
        <title>Complete genome sequence of a virulent isolate of Streptococcus pneumoniae.</title>
        <authorList>
            <person name="Tettelin H."/>
            <person name="Nelson K.E."/>
            <person name="Paulsen I.T."/>
            <person name="Eisen J.A."/>
            <person name="Read T.D."/>
            <person name="Peterson S.N."/>
            <person name="Heidelberg J.F."/>
            <person name="DeBoy R.T."/>
            <person name="Haft D.H."/>
            <person name="Dodson R.J."/>
            <person name="Durkin A.S."/>
            <person name="Gwinn M.L."/>
            <person name="Kolonay J.F."/>
            <person name="Nelson W.C."/>
            <person name="Peterson J.D."/>
            <person name="Umayam L.A."/>
            <person name="White O."/>
            <person name="Salzberg S.L."/>
            <person name="Lewis M.R."/>
            <person name="Radune D."/>
            <person name="Holtzapple E.K."/>
            <person name="Khouri H.M."/>
            <person name="Wolf A.M."/>
            <person name="Utterback T.R."/>
            <person name="Hansen C.L."/>
            <person name="McDonald L.A."/>
            <person name="Feldblyum T.V."/>
            <person name="Angiuoli S.V."/>
            <person name="Dickinson T."/>
            <person name="Hickey E.K."/>
            <person name="Holt I.E."/>
            <person name="Loftus B.J."/>
            <person name="Yang F."/>
            <person name="Smith H.O."/>
            <person name="Venter J.C."/>
            <person name="Dougherty B.A."/>
            <person name="Morrison D.A."/>
            <person name="Hollingshead S.K."/>
            <person name="Fraser C.M."/>
        </authorList>
    </citation>
    <scope>NUCLEOTIDE SEQUENCE [LARGE SCALE GENOMIC DNA]</scope>
    <source>
        <strain>ATCC BAA-334 / TIGR4</strain>
    </source>
</reference>
<evidence type="ECO:0000250" key="1"/>
<evidence type="ECO:0000255" key="2">
    <source>
        <dbReference type="HAMAP-Rule" id="MF_00127"/>
    </source>
</evidence>
<sequence length="429" mass="48654">MKLQKPKGTQDILPAESAKWQYVEGFAREIFKRYNYAEVRTPIFEHYEVISRSVGDTTDIVTKEMYDFYDKGDRHITLRPEGTAPVVRSYVENKLFAPEVQKPSKFYYMGPMFRYERPQAGRLRQFHQIGVECFGSSNPATDVETIAMAAHFLKEIGIQGVKLHLNTLGNPESRAAYRQALIDYLTPLKETLSKDSQRRLEENPLRVLDSKEKEDKVAVENAPSILDFLDEESQAHFDAVRQMLENLGVDYIIDTNMVRGLDYYNHTIFEFITEIEGNDLTVCAGGRYDGLVAYFGGPETAGFGFGLGVERLLLILEKQGVTLPIENALDVYIAVLGEGANIKALELVQALRQQGFKAERDYLNRKLKAQFKSADVFAAKTLITLGESEVESGQVTVKNNQTREEVQVSLETISQNFSEIFEKLGFYTQ</sequence>
<comment type="catalytic activity">
    <reaction evidence="2">
        <text>tRNA(His) + L-histidine + ATP = L-histidyl-tRNA(His) + AMP + diphosphate + H(+)</text>
        <dbReference type="Rhea" id="RHEA:17313"/>
        <dbReference type="Rhea" id="RHEA-COMP:9665"/>
        <dbReference type="Rhea" id="RHEA-COMP:9689"/>
        <dbReference type="ChEBI" id="CHEBI:15378"/>
        <dbReference type="ChEBI" id="CHEBI:30616"/>
        <dbReference type="ChEBI" id="CHEBI:33019"/>
        <dbReference type="ChEBI" id="CHEBI:57595"/>
        <dbReference type="ChEBI" id="CHEBI:78442"/>
        <dbReference type="ChEBI" id="CHEBI:78527"/>
        <dbReference type="ChEBI" id="CHEBI:456215"/>
        <dbReference type="EC" id="6.1.1.21"/>
    </reaction>
</comment>
<comment type="subunit">
    <text evidence="2">Homodimer.</text>
</comment>
<comment type="subcellular location">
    <subcellularLocation>
        <location evidence="2">Cytoplasm</location>
    </subcellularLocation>
</comment>
<comment type="similarity">
    <text evidence="2">Belongs to the class-II aminoacyl-tRNA synthetase family.</text>
</comment>
<accession>Q97NC9</accession>
<keyword id="KW-0030">Aminoacyl-tRNA synthetase</keyword>
<keyword id="KW-0067">ATP-binding</keyword>
<keyword id="KW-0963">Cytoplasm</keyword>
<keyword id="KW-0436">Ligase</keyword>
<keyword id="KW-0547">Nucleotide-binding</keyword>
<keyword id="KW-0648">Protein biosynthesis</keyword>
<keyword id="KW-1185">Reference proteome</keyword>
<protein>
    <recommendedName>
        <fullName evidence="2">Histidine--tRNA ligase</fullName>
        <ecNumber evidence="2">6.1.1.21</ecNumber>
    </recommendedName>
    <alternativeName>
        <fullName evidence="2">Histidyl-tRNA synthetase</fullName>
        <shortName evidence="2">HisRS</shortName>
    </alternativeName>
</protein>
<proteinExistence type="inferred from homology"/>